<reference key="1">
    <citation type="journal article" date="2005" name="Science">
        <title>Genome sequence of the PCE-dechlorinating bacterium Dehalococcoides ethenogenes.</title>
        <authorList>
            <person name="Seshadri R."/>
            <person name="Adrian L."/>
            <person name="Fouts D.E."/>
            <person name="Eisen J.A."/>
            <person name="Phillippy A.M."/>
            <person name="Methe B.A."/>
            <person name="Ward N.L."/>
            <person name="Nelson W.C."/>
            <person name="DeBoy R.T."/>
            <person name="Khouri H.M."/>
            <person name="Kolonay J.F."/>
            <person name="Dodson R.J."/>
            <person name="Daugherty S.C."/>
            <person name="Brinkac L.M."/>
            <person name="Sullivan S.A."/>
            <person name="Madupu R."/>
            <person name="Nelson K.E."/>
            <person name="Kang K.H."/>
            <person name="Impraim M."/>
            <person name="Tran K."/>
            <person name="Robinson J.M."/>
            <person name="Forberger H.A."/>
            <person name="Fraser C.M."/>
            <person name="Zinder S.H."/>
            <person name="Heidelberg J.F."/>
        </authorList>
    </citation>
    <scope>NUCLEOTIDE SEQUENCE [LARGE SCALE GENOMIC DNA]</scope>
    <source>
        <strain>ATCC BAA-2266 / KCTC 15142 / 195</strain>
    </source>
</reference>
<comment type="function">
    <text evidence="1">Catalyzes the synthesis of GMP from XMP.</text>
</comment>
<comment type="catalytic activity">
    <reaction evidence="1">
        <text>XMP + L-glutamine + ATP + H2O = GMP + L-glutamate + AMP + diphosphate + 2 H(+)</text>
        <dbReference type="Rhea" id="RHEA:11680"/>
        <dbReference type="ChEBI" id="CHEBI:15377"/>
        <dbReference type="ChEBI" id="CHEBI:15378"/>
        <dbReference type="ChEBI" id="CHEBI:29985"/>
        <dbReference type="ChEBI" id="CHEBI:30616"/>
        <dbReference type="ChEBI" id="CHEBI:33019"/>
        <dbReference type="ChEBI" id="CHEBI:57464"/>
        <dbReference type="ChEBI" id="CHEBI:58115"/>
        <dbReference type="ChEBI" id="CHEBI:58359"/>
        <dbReference type="ChEBI" id="CHEBI:456215"/>
        <dbReference type="EC" id="6.3.5.2"/>
    </reaction>
</comment>
<comment type="pathway">
    <text evidence="1">Purine metabolism; GMP biosynthesis; GMP from XMP (L-Gln route): step 1/1.</text>
</comment>
<comment type="subunit">
    <text evidence="1">Homodimer.</text>
</comment>
<name>GUAA_DEHM1</name>
<evidence type="ECO:0000255" key="1">
    <source>
        <dbReference type="HAMAP-Rule" id="MF_00344"/>
    </source>
</evidence>
<proteinExistence type="inferred from homology"/>
<keyword id="KW-0067">ATP-binding</keyword>
<keyword id="KW-0315">Glutamine amidotransferase</keyword>
<keyword id="KW-0332">GMP biosynthesis</keyword>
<keyword id="KW-0436">Ligase</keyword>
<keyword id="KW-0547">Nucleotide-binding</keyword>
<keyword id="KW-0658">Purine biosynthesis</keyword>
<feature type="chain" id="PRO_0000229421" description="GMP synthase [glutamine-hydrolyzing]">
    <location>
        <begin position="1"/>
        <end position="533"/>
    </location>
</feature>
<feature type="domain" description="Glutamine amidotransferase type-1" evidence="1">
    <location>
        <begin position="25"/>
        <end position="215"/>
    </location>
</feature>
<feature type="domain" description="GMPS ATP-PPase" evidence="1">
    <location>
        <begin position="216"/>
        <end position="408"/>
    </location>
</feature>
<feature type="active site" description="Nucleophile" evidence="1">
    <location>
        <position position="102"/>
    </location>
</feature>
<feature type="active site" evidence="1">
    <location>
        <position position="189"/>
    </location>
</feature>
<feature type="active site" evidence="1">
    <location>
        <position position="191"/>
    </location>
</feature>
<feature type="binding site" evidence="1">
    <location>
        <begin position="243"/>
        <end position="249"/>
    </location>
    <ligand>
        <name>ATP</name>
        <dbReference type="ChEBI" id="CHEBI:30616"/>
    </ligand>
</feature>
<protein>
    <recommendedName>
        <fullName evidence="1">GMP synthase [glutamine-hydrolyzing]</fullName>
        <ecNumber evidence="1">6.3.5.2</ecNumber>
    </recommendedName>
    <alternativeName>
        <fullName evidence="1">GMP synthetase</fullName>
    </alternativeName>
    <alternativeName>
        <fullName evidence="1">Glutamine amidotransferase</fullName>
    </alternativeName>
</protein>
<accession>Q3Z886</accession>
<organism>
    <name type="scientific">Dehalococcoides mccartyi (strain ATCC BAA-2266 / KCTC 15142 / 195)</name>
    <name type="common">Dehalococcoides ethenogenes (strain 195)</name>
    <dbReference type="NCBI Taxonomy" id="243164"/>
    <lineage>
        <taxon>Bacteria</taxon>
        <taxon>Bacillati</taxon>
        <taxon>Chloroflexota</taxon>
        <taxon>Dehalococcoidia</taxon>
        <taxon>Dehalococcoidales</taxon>
        <taxon>Dehalococcoidaceae</taxon>
        <taxon>Dehalococcoides</taxon>
    </lineage>
</organism>
<gene>
    <name evidence="1" type="primary">guaA</name>
    <name type="ordered locus">DET0836</name>
</gene>
<sequence>MEIAKEKSGAKPEFIDNEDESLRESIVIFDFGSQYSLLIARRIREMHVYCELVSHDTPWEKIAHLNPRGFILSGGPSSVYEAGAPLAPAYIFESKLPVLGICYGMQAITHQLGGVVEHSEKREYGHALLHSSVANSDLLSDMPEPSPVWMSHGDRIEKMPAGFTALAYTENCPVAVMGNEADIYGLQFHPEVVHSPNGKIILKNFVFNICKCHANWTMGNYIQESIHNIREQVGDGQVICALSGGVDSAVVASLIHKAIGDQLTCIYVNNGLLRREEADRTLHVFKNHMGMKIIYVDAVDRFLDSLSGVTDPEQKRKVIGSEFIKVFEDEACKLGKIDFLAQGTLYPDVIESVSSVSKASAKIKSHHNVGGLPAHMKLKLIEPLRYLFKDEVRLLGKELGLPDEMIWRQPFPGPGLAIRIIGEVTREKLEILRAADWIVMSEIKKAKMYHQVWQSFAILTDVKSVGVMGDFRTYGYLVAIRAVTSEDAMTADWAKLPYDLLSVISNRIVNEVKEVNRVVYDISSKPPSTIEWE</sequence>
<dbReference type="EC" id="6.3.5.2" evidence="1"/>
<dbReference type="EMBL" id="CP000027">
    <property type="protein sequence ID" value="AAW39914.1"/>
    <property type="molecule type" value="Genomic_DNA"/>
</dbReference>
<dbReference type="RefSeq" id="WP_010936564.1">
    <property type="nucleotide sequence ID" value="NC_002936.3"/>
</dbReference>
<dbReference type="SMR" id="Q3Z886"/>
<dbReference type="FunCoup" id="Q3Z886">
    <property type="interactions" value="364"/>
</dbReference>
<dbReference type="STRING" id="243164.DET0836"/>
<dbReference type="MEROPS" id="C26.957"/>
<dbReference type="GeneID" id="3229876"/>
<dbReference type="KEGG" id="det:DET0836"/>
<dbReference type="eggNOG" id="COG0518">
    <property type="taxonomic scope" value="Bacteria"/>
</dbReference>
<dbReference type="eggNOG" id="COG0519">
    <property type="taxonomic scope" value="Bacteria"/>
</dbReference>
<dbReference type="HOGENOM" id="CLU_014340_0_5_0"/>
<dbReference type="InParanoid" id="Q3Z886"/>
<dbReference type="UniPathway" id="UPA00189">
    <property type="reaction ID" value="UER00296"/>
</dbReference>
<dbReference type="Proteomes" id="UP000008289">
    <property type="component" value="Chromosome"/>
</dbReference>
<dbReference type="GO" id="GO:0005829">
    <property type="term" value="C:cytosol"/>
    <property type="evidence" value="ECO:0007669"/>
    <property type="project" value="TreeGrafter"/>
</dbReference>
<dbReference type="GO" id="GO:0005524">
    <property type="term" value="F:ATP binding"/>
    <property type="evidence" value="ECO:0007669"/>
    <property type="project" value="UniProtKB-UniRule"/>
</dbReference>
<dbReference type="GO" id="GO:0003921">
    <property type="term" value="F:GMP synthase activity"/>
    <property type="evidence" value="ECO:0007669"/>
    <property type="project" value="InterPro"/>
</dbReference>
<dbReference type="CDD" id="cd01742">
    <property type="entry name" value="GATase1_GMP_Synthase"/>
    <property type="match status" value="1"/>
</dbReference>
<dbReference type="CDD" id="cd01997">
    <property type="entry name" value="GMP_synthase_C"/>
    <property type="match status" value="1"/>
</dbReference>
<dbReference type="FunFam" id="3.30.300.10:FF:000002">
    <property type="entry name" value="GMP synthase [glutamine-hydrolyzing]"/>
    <property type="match status" value="1"/>
</dbReference>
<dbReference type="FunFam" id="3.40.50.620:FF:000001">
    <property type="entry name" value="GMP synthase [glutamine-hydrolyzing]"/>
    <property type="match status" value="1"/>
</dbReference>
<dbReference type="FunFam" id="3.40.50.880:FF:000001">
    <property type="entry name" value="GMP synthase [glutamine-hydrolyzing]"/>
    <property type="match status" value="1"/>
</dbReference>
<dbReference type="Gene3D" id="3.30.300.10">
    <property type="match status" value="1"/>
</dbReference>
<dbReference type="Gene3D" id="3.40.50.880">
    <property type="match status" value="1"/>
</dbReference>
<dbReference type="Gene3D" id="3.40.50.620">
    <property type="entry name" value="HUPs"/>
    <property type="match status" value="1"/>
</dbReference>
<dbReference type="HAMAP" id="MF_00344">
    <property type="entry name" value="GMP_synthase"/>
    <property type="match status" value="1"/>
</dbReference>
<dbReference type="InterPro" id="IPR029062">
    <property type="entry name" value="Class_I_gatase-like"/>
</dbReference>
<dbReference type="InterPro" id="IPR017926">
    <property type="entry name" value="GATASE"/>
</dbReference>
<dbReference type="InterPro" id="IPR001674">
    <property type="entry name" value="GMP_synth_C"/>
</dbReference>
<dbReference type="InterPro" id="IPR004739">
    <property type="entry name" value="GMP_synth_GATase"/>
</dbReference>
<dbReference type="InterPro" id="IPR022955">
    <property type="entry name" value="GMP_synthase"/>
</dbReference>
<dbReference type="InterPro" id="IPR025777">
    <property type="entry name" value="GMPS_ATP_PPase_dom"/>
</dbReference>
<dbReference type="InterPro" id="IPR022310">
    <property type="entry name" value="NAD/GMP_synthase"/>
</dbReference>
<dbReference type="InterPro" id="IPR014729">
    <property type="entry name" value="Rossmann-like_a/b/a_fold"/>
</dbReference>
<dbReference type="NCBIfam" id="TIGR00884">
    <property type="entry name" value="guaA_Cterm"/>
    <property type="match status" value="1"/>
</dbReference>
<dbReference type="NCBIfam" id="TIGR00888">
    <property type="entry name" value="guaA_Nterm"/>
    <property type="match status" value="1"/>
</dbReference>
<dbReference type="NCBIfam" id="NF000848">
    <property type="entry name" value="PRK00074.1"/>
    <property type="match status" value="1"/>
</dbReference>
<dbReference type="PANTHER" id="PTHR11922:SF2">
    <property type="entry name" value="GMP SYNTHASE [GLUTAMINE-HYDROLYZING]"/>
    <property type="match status" value="1"/>
</dbReference>
<dbReference type="PANTHER" id="PTHR11922">
    <property type="entry name" value="GMP SYNTHASE-RELATED"/>
    <property type="match status" value="1"/>
</dbReference>
<dbReference type="Pfam" id="PF00117">
    <property type="entry name" value="GATase"/>
    <property type="match status" value="1"/>
</dbReference>
<dbReference type="Pfam" id="PF00958">
    <property type="entry name" value="GMP_synt_C"/>
    <property type="match status" value="1"/>
</dbReference>
<dbReference type="Pfam" id="PF02540">
    <property type="entry name" value="NAD_synthase"/>
    <property type="match status" value="1"/>
</dbReference>
<dbReference type="PRINTS" id="PR00097">
    <property type="entry name" value="ANTSNTHASEII"/>
</dbReference>
<dbReference type="PRINTS" id="PR00096">
    <property type="entry name" value="GATASE"/>
</dbReference>
<dbReference type="SUPFAM" id="SSF52402">
    <property type="entry name" value="Adenine nucleotide alpha hydrolases-like"/>
    <property type="match status" value="1"/>
</dbReference>
<dbReference type="SUPFAM" id="SSF52317">
    <property type="entry name" value="Class I glutamine amidotransferase-like"/>
    <property type="match status" value="1"/>
</dbReference>
<dbReference type="SUPFAM" id="SSF54810">
    <property type="entry name" value="GMP synthetase C-terminal dimerisation domain"/>
    <property type="match status" value="1"/>
</dbReference>
<dbReference type="PROSITE" id="PS51273">
    <property type="entry name" value="GATASE_TYPE_1"/>
    <property type="match status" value="1"/>
</dbReference>
<dbReference type="PROSITE" id="PS51553">
    <property type="entry name" value="GMPS_ATP_PPASE"/>
    <property type="match status" value="1"/>
</dbReference>